<reference key="1">
    <citation type="submission" date="2009-01" db="EMBL/GenBank/DDBJ databases">
        <title>Complete sequence of Anaeromyxobacter dehalogenans 2CP-1.</title>
        <authorList>
            <person name="Lucas S."/>
            <person name="Copeland A."/>
            <person name="Lapidus A."/>
            <person name="Glavina del Rio T."/>
            <person name="Dalin E."/>
            <person name="Tice H."/>
            <person name="Bruce D."/>
            <person name="Goodwin L."/>
            <person name="Pitluck S."/>
            <person name="Saunders E."/>
            <person name="Brettin T."/>
            <person name="Detter J.C."/>
            <person name="Han C."/>
            <person name="Larimer F."/>
            <person name="Land M."/>
            <person name="Hauser L."/>
            <person name="Kyrpides N."/>
            <person name="Ovchinnikova G."/>
            <person name="Beliaev A.S."/>
            <person name="Richardson P."/>
        </authorList>
    </citation>
    <scope>NUCLEOTIDE SEQUENCE [LARGE SCALE GENOMIC DNA]</scope>
    <source>
        <strain>2CP-1 / ATCC BAA-258</strain>
    </source>
</reference>
<comment type="function">
    <text evidence="1">Specifically methylates the pseudouridine at position 1915 (m3Psi1915) in 23S rRNA.</text>
</comment>
<comment type="catalytic activity">
    <reaction evidence="1">
        <text>pseudouridine(1915) in 23S rRNA + S-adenosyl-L-methionine = N(3)-methylpseudouridine(1915) in 23S rRNA + S-adenosyl-L-homocysteine + H(+)</text>
        <dbReference type="Rhea" id="RHEA:42752"/>
        <dbReference type="Rhea" id="RHEA-COMP:10221"/>
        <dbReference type="Rhea" id="RHEA-COMP:10222"/>
        <dbReference type="ChEBI" id="CHEBI:15378"/>
        <dbReference type="ChEBI" id="CHEBI:57856"/>
        <dbReference type="ChEBI" id="CHEBI:59789"/>
        <dbReference type="ChEBI" id="CHEBI:65314"/>
        <dbReference type="ChEBI" id="CHEBI:74486"/>
        <dbReference type="EC" id="2.1.1.177"/>
    </reaction>
</comment>
<comment type="subunit">
    <text evidence="1">Homodimer.</text>
</comment>
<comment type="subcellular location">
    <subcellularLocation>
        <location evidence="1">Cytoplasm</location>
    </subcellularLocation>
</comment>
<comment type="similarity">
    <text evidence="1">Belongs to the RNA methyltransferase RlmH family.</text>
</comment>
<sequence length="153" mass="17011">MKVRVVAVGRDRSGLYAPAVDEYAKRLGRYLRFELVEVPEARKLAGTAGAKGEEGATLLAKVGPRERVVVLDERGDELTSVAFAERVRRWMERGQDVALLIGGSDGLAPEVLARADERLAVSRFTLAHRLARLVLVEQLYRAMTILRGEPYHK</sequence>
<organism>
    <name type="scientific">Anaeromyxobacter dehalogenans (strain 2CP-1 / ATCC BAA-258)</name>
    <dbReference type="NCBI Taxonomy" id="455488"/>
    <lineage>
        <taxon>Bacteria</taxon>
        <taxon>Pseudomonadati</taxon>
        <taxon>Myxococcota</taxon>
        <taxon>Myxococcia</taxon>
        <taxon>Myxococcales</taxon>
        <taxon>Cystobacterineae</taxon>
        <taxon>Anaeromyxobacteraceae</taxon>
        <taxon>Anaeromyxobacter</taxon>
    </lineage>
</organism>
<protein>
    <recommendedName>
        <fullName evidence="1">Ribosomal RNA large subunit methyltransferase H</fullName>
        <ecNumber evidence="1">2.1.1.177</ecNumber>
    </recommendedName>
    <alternativeName>
        <fullName evidence="1">23S rRNA (pseudouridine1915-N3)-methyltransferase</fullName>
    </alternativeName>
    <alternativeName>
        <fullName evidence="1">23S rRNA m3Psi1915 methyltransferase</fullName>
    </alternativeName>
    <alternativeName>
        <fullName evidence="1">rRNA (pseudouridine-N3-)-methyltransferase RlmH</fullName>
    </alternativeName>
</protein>
<evidence type="ECO:0000255" key="1">
    <source>
        <dbReference type="HAMAP-Rule" id="MF_00658"/>
    </source>
</evidence>
<dbReference type="EC" id="2.1.1.177" evidence="1"/>
<dbReference type="EMBL" id="CP001359">
    <property type="protein sequence ID" value="ACL63614.1"/>
    <property type="molecule type" value="Genomic_DNA"/>
</dbReference>
<dbReference type="RefSeq" id="WP_012631676.1">
    <property type="nucleotide sequence ID" value="NC_011891.1"/>
</dbReference>
<dbReference type="SMR" id="B8J916"/>
<dbReference type="KEGG" id="acp:A2cp1_0255"/>
<dbReference type="HOGENOM" id="CLU_100552_1_0_7"/>
<dbReference type="Proteomes" id="UP000007089">
    <property type="component" value="Chromosome"/>
</dbReference>
<dbReference type="GO" id="GO:0005737">
    <property type="term" value="C:cytoplasm"/>
    <property type="evidence" value="ECO:0007669"/>
    <property type="project" value="UniProtKB-SubCell"/>
</dbReference>
<dbReference type="GO" id="GO:0070038">
    <property type="term" value="F:rRNA (pseudouridine-N3-)-methyltransferase activity"/>
    <property type="evidence" value="ECO:0007669"/>
    <property type="project" value="UniProtKB-UniRule"/>
</dbReference>
<dbReference type="CDD" id="cd18081">
    <property type="entry name" value="RlmH-like"/>
    <property type="match status" value="1"/>
</dbReference>
<dbReference type="Gene3D" id="3.40.1280.10">
    <property type="match status" value="1"/>
</dbReference>
<dbReference type="HAMAP" id="MF_00658">
    <property type="entry name" value="23SrRNA_methyltr_H"/>
    <property type="match status" value="1"/>
</dbReference>
<dbReference type="InterPro" id="IPR029028">
    <property type="entry name" value="Alpha/beta_knot_MTases"/>
</dbReference>
<dbReference type="InterPro" id="IPR003742">
    <property type="entry name" value="RlmH-like"/>
</dbReference>
<dbReference type="InterPro" id="IPR029026">
    <property type="entry name" value="tRNA_m1G_MTases_N"/>
</dbReference>
<dbReference type="NCBIfam" id="NF000986">
    <property type="entry name" value="PRK00103.1-4"/>
    <property type="match status" value="1"/>
</dbReference>
<dbReference type="PANTHER" id="PTHR33603">
    <property type="entry name" value="METHYLTRANSFERASE"/>
    <property type="match status" value="1"/>
</dbReference>
<dbReference type="PANTHER" id="PTHR33603:SF1">
    <property type="entry name" value="RIBOSOMAL RNA LARGE SUBUNIT METHYLTRANSFERASE H"/>
    <property type="match status" value="1"/>
</dbReference>
<dbReference type="Pfam" id="PF02590">
    <property type="entry name" value="SPOUT_MTase"/>
    <property type="match status" value="1"/>
</dbReference>
<dbReference type="PIRSF" id="PIRSF004505">
    <property type="entry name" value="MT_bac"/>
    <property type="match status" value="1"/>
</dbReference>
<dbReference type="SUPFAM" id="SSF75217">
    <property type="entry name" value="alpha/beta knot"/>
    <property type="match status" value="1"/>
</dbReference>
<gene>
    <name evidence="1" type="primary">rlmH</name>
    <name type="ordered locus">A2cp1_0255</name>
</gene>
<accession>B8J916</accession>
<feature type="chain" id="PRO_1000199809" description="Ribosomal RNA large subunit methyltransferase H">
    <location>
        <begin position="1"/>
        <end position="153"/>
    </location>
</feature>
<feature type="binding site" evidence="1">
    <location>
        <position position="71"/>
    </location>
    <ligand>
        <name>S-adenosyl-L-methionine</name>
        <dbReference type="ChEBI" id="CHEBI:59789"/>
    </ligand>
</feature>
<feature type="binding site" evidence="1">
    <location>
        <position position="102"/>
    </location>
    <ligand>
        <name>S-adenosyl-L-methionine</name>
        <dbReference type="ChEBI" id="CHEBI:59789"/>
    </ligand>
</feature>
<keyword id="KW-0963">Cytoplasm</keyword>
<keyword id="KW-0489">Methyltransferase</keyword>
<keyword id="KW-0698">rRNA processing</keyword>
<keyword id="KW-0949">S-adenosyl-L-methionine</keyword>
<keyword id="KW-0808">Transferase</keyword>
<name>RLMH_ANAD2</name>
<proteinExistence type="inferred from homology"/>